<dbReference type="EC" id="4.4.1.21" evidence="1"/>
<dbReference type="EMBL" id="BA000033">
    <property type="protein sequence ID" value="BAB95923.1"/>
    <property type="molecule type" value="Genomic_DNA"/>
</dbReference>
<dbReference type="RefSeq" id="WP_000164421.1">
    <property type="nucleotide sequence ID" value="NC_003923.1"/>
</dbReference>
<dbReference type="SMR" id="P65331"/>
<dbReference type="KEGG" id="sam:MW2058"/>
<dbReference type="HOGENOM" id="CLU_107531_2_0_9"/>
<dbReference type="GO" id="GO:0005506">
    <property type="term" value="F:iron ion binding"/>
    <property type="evidence" value="ECO:0007669"/>
    <property type="project" value="InterPro"/>
</dbReference>
<dbReference type="GO" id="GO:0043768">
    <property type="term" value="F:S-ribosylhomocysteine lyase activity"/>
    <property type="evidence" value="ECO:0007669"/>
    <property type="project" value="UniProtKB-UniRule"/>
</dbReference>
<dbReference type="GO" id="GO:0009372">
    <property type="term" value="P:quorum sensing"/>
    <property type="evidence" value="ECO:0007669"/>
    <property type="project" value="UniProtKB-UniRule"/>
</dbReference>
<dbReference type="Gene3D" id="3.30.1360.80">
    <property type="entry name" value="S-ribosylhomocysteinase (LuxS)"/>
    <property type="match status" value="1"/>
</dbReference>
<dbReference type="HAMAP" id="MF_00091">
    <property type="entry name" value="LuxS"/>
    <property type="match status" value="1"/>
</dbReference>
<dbReference type="InterPro" id="IPR037005">
    <property type="entry name" value="LuxS_sf"/>
</dbReference>
<dbReference type="InterPro" id="IPR011249">
    <property type="entry name" value="Metalloenz_LuxS/M16"/>
</dbReference>
<dbReference type="InterPro" id="IPR003815">
    <property type="entry name" value="S-ribosylhomocysteinase"/>
</dbReference>
<dbReference type="NCBIfam" id="NF002604">
    <property type="entry name" value="PRK02260.1-4"/>
    <property type="match status" value="1"/>
</dbReference>
<dbReference type="PANTHER" id="PTHR35799">
    <property type="entry name" value="S-RIBOSYLHOMOCYSTEINE LYASE"/>
    <property type="match status" value="1"/>
</dbReference>
<dbReference type="PANTHER" id="PTHR35799:SF1">
    <property type="entry name" value="S-RIBOSYLHOMOCYSTEINE LYASE"/>
    <property type="match status" value="1"/>
</dbReference>
<dbReference type="Pfam" id="PF02664">
    <property type="entry name" value="LuxS"/>
    <property type="match status" value="1"/>
</dbReference>
<dbReference type="PIRSF" id="PIRSF006160">
    <property type="entry name" value="AI2"/>
    <property type="match status" value="1"/>
</dbReference>
<dbReference type="PRINTS" id="PR01487">
    <property type="entry name" value="LUXSPROTEIN"/>
</dbReference>
<dbReference type="SUPFAM" id="SSF63411">
    <property type="entry name" value="LuxS/MPP-like metallohydrolase"/>
    <property type="match status" value="1"/>
</dbReference>
<keyword id="KW-0071">Autoinducer synthesis</keyword>
<keyword id="KW-0408">Iron</keyword>
<keyword id="KW-0456">Lyase</keyword>
<keyword id="KW-0479">Metal-binding</keyword>
<keyword id="KW-0673">Quorum sensing</keyword>
<proteinExistence type="inferred from homology"/>
<feature type="chain" id="PRO_0000172258" description="S-ribosylhomocysteine lyase">
    <location>
        <begin position="1"/>
        <end position="156"/>
    </location>
</feature>
<feature type="binding site" evidence="1">
    <location>
        <position position="56"/>
    </location>
    <ligand>
        <name>Fe cation</name>
        <dbReference type="ChEBI" id="CHEBI:24875"/>
    </ligand>
</feature>
<feature type="binding site" evidence="1">
    <location>
        <position position="60"/>
    </location>
    <ligand>
        <name>Fe cation</name>
        <dbReference type="ChEBI" id="CHEBI:24875"/>
    </ligand>
</feature>
<feature type="binding site" evidence="1">
    <location>
        <position position="123"/>
    </location>
    <ligand>
        <name>Fe cation</name>
        <dbReference type="ChEBI" id="CHEBI:24875"/>
    </ligand>
</feature>
<reference key="1">
    <citation type="journal article" date="2002" name="Lancet">
        <title>Genome and virulence determinants of high virulence community-acquired MRSA.</title>
        <authorList>
            <person name="Baba T."/>
            <person name="Takeuchi F."/>
            <person name="Kuroda M."/>
            <person name="Yuzawa H."/>
            <person name="Aoki K."/>
            <person name="Oguchi A."/>
            <person name="Nagai Y."/>
            <person name="Iwama N."/>
            <person name="Asano K."/>
            <person name="Naimi T."/>
            <person name="Kuroda H."/>
            <person name="Cui L."/>
            <person name="Yamamoto K."/>
            <person name="Hiramatsu K."/>
        </authorList>
    </citation>
    <scope>NUCLEOTIDE SEQUENCE [LARGE SCALE GENOMIC DNA]</scope>
    <source>
        <strain>MW2</strain>
    </source>
</reference>
<comment type="function">
    <text evidence="1">Involved in the synthesis of autoinducer 2 (AI-2) which is secreted by bacteria and is used to communicate both the cell density and the metabolic potential of the environment. The regulation of gene expression in response to changes in cell density is called quorum sensing. Catalyzes the transformation of S-ribosylhomocysteine (RHC) to homocysteine (HC) and 4,5-dihydroxy-2,3-pentadione (DPD).</text>
</comment>
<comment type="catalytic activity">
    <reaction evidence="1">
        <text>S-(5-deoxy-D-ribos-5-yl)-L-homocysteine = (S)-4,5-dihydroxypentane-2,3-dione + L-homocysteine</text>
        <dbReference type="Rhea" id="RHEA:17753"/>
        <dbReference type="ChEBI" id="CHEBI:29484"/>
        <dbReference type="ChEBI" id="CHEBI:58195"/>
        <dbReference type="ChEBI" id="CHEBI:58199"/>
        <dbReference type="EC" id="4.4.1.21"/>
    </reaction>
</comment>
<comment type="cofactor">
    <cofactor evidence="1">
        <name>Fe cation</name>
        <dbReference type="ChEBI" id="CHEBI:24875"/>
    </cofactor>
    <text evidence="1">Binds 1 Fe cation per subunit.</text>
</comment>
<comment type="subunit">
    <text evidence="1">Homodimer.</text>
</comment>
<comment type="similarity">
    <text evidence="1">Belongs to the LuxS family.</text>
</comment>
<name>LUXS_STAAW</name>
<organism>
    <name type="scientific">Staphylococcus aureus (strain MW2)</name>
    <dbReference type="NCBI Taxonomy" id="196620"/>
    <lineage>
        <taxon>Bacteria</taxon>
        <taxon>Bacillati</taxon>
        <taxon>Bacillota</taxon>
        <taxon>Bacilli</taxon>
        <taxon>Bacillales</taxon>
        <taxon>Staphylococcaceae</taxon>
        <taxon>Staphylococcus</taxon>
    </lineage>
</organism>
<evidence type="ECO:0000255" key="1">
    <source>
        <dbReference type="HAMAP-Rule" id="MF_00091"/>
    </source>
</evidence>
<gene>
    <name evidence="1" type="primary">luxS</name>
    <name type="ordered locus">MW2058</name>
</gene>
<accession>P65331</accession>
<accession>Q99SC5</accession>
<protein>
    <recommendedName>
        <fullName evidence="1">S-ribosylhomocysteine lyase</fullName>
        <ecNumber evidence="1">4.4.1.21</ecNumber>
    </recommendedName>
    <alternativeName>
        <fullName evidence="1">AI-2 synthesis protein</fullName>
    </alternativeName>
    <alternativeName>
        <fullName evidence="1">Autoinducer-2 production protein LuxS</fullName>
    </alternativeName>
</protein>
<sequence>MTKMNVESFNLDHTKVVAPFIRLAGTMEGLNGDVIHKYDIRFKQPNKEHMDMPGLHSLEHLMAENIRNHSDKVVDLSPMGCQTGFYVSFINHDNYDDVLNIVEATLNDVLNATEVPACNEVQCGWAASHSLEGAKTIAQAFLDKRNEWHDVFGTGK</sequence>